<keyword id="KW-0025">Alternative splicing</keyword>
<keyword id="KW-0963">Cytoplasm</keyword>
<keyword id="KW-0206">Cytoskeleton</keyword>
<keyword id="KW-0479">Metal-binding</keyword>
<keyword id="KW-0862">Zinc</keyword>
<name>MOB1A_MEDSF</name>
<evidence type="ECO:0000250" key="1">
    <source>
        <dbReference type="UniProtKB" id="P40484"/>
    </source>
</evidence>
<evidence type="ECO:0000256" key="2">
    <source>
        <dbReference type="SAM" id="MobiDB-lite"/>
    </source>
</evidence>
<evidence type="ECO:0000269" key="3">
    <source>
    </source>
</evidence>
<evidence type="ECO:0000269" key="4">
    <source>
    </source>
</evidence>
<evidence type="ECO:0000303" key="5">
    <source>
    </source>
</evidence>
<evidence type="ECO:0000303" key="6">
    <source>
    </source>
</evidence>
<evidence type="ECO:0000303" key="7">
    <source>
    </source>
</evidence>
<evidence type="ECO:0000305" key="8"/>
<reference key="1">
    <citation type="journal article" date="2001" name="Sex. Plant Reprod.">
        <title>Analysis of gene expression during flowering in apomeiotic mutants of Medicago spp.: cloning of ESTs and candidate genes for 2n eggs.</title>
        <authorList>
            <person name="Barcaccia G."/>
            <person name="Varotto S."/>
            <person name="Albertini E."/>
            <person name="Porceddu A."/>
            <person name="Meneghetti S."/>
            <person name="Parrini P."/>
            <person name="Lucchin M."/>
        </authorList>
    </citation>
    <scope>NUCLEOTIDE SEQUENCE [MRNA] (ISOFORM 1)</scope>
</reference>
<reference key="2">
    <citation type="journal article" date="2005" name="Plant Mol. Biol.">
        <title>Alfalfa Mob 1-like genes are expressed in reproductive organs during meiosis and gametogenesis.</title>
        <authorList>
            <person name="Citterio S."/>
            <person name="Albertini E."/>
            <person name="Varotto S."/>
            <person name="Feltrin E."/>
            <person name="Soattin M."/>
            <person name="Marconi G."/>
            <person name="Sgorbati S."/>
            <person name="Lucchin M."/>
            <person name="Barcaccia G."/>
        </authorList>
    </citation>
    <scope>NUCLEOTIDE SEQUENCE [GENOMIC DNA / MRNA] (ISOFORMS 1 AND 2)</scope>
    <scope>TISSUE SPECIFICITY</scope>
    <scope>DEVELOPMENTAL STAGE</scope>
    <source>
        <tissue>Flower bud</tissue>
    </source>
</reference>
<reference key="3">
    <citation type="journal article" date="2006" name="Exp. Cell Res.">
        <title>Alfalfa Mob1-like proteins are involved in cell proliferation and are localized in the cell division plane during cytokinesis.</title>
        <authorList>
            <person name="Citterio S."/>
            <person name="Piatti S."/>
            <person name="Albertini E."/>
            <person name="Aina R."/>
            <person name="Varotto S."/>
            <person name="Barcaccia G."/>
        </authorList>
    </citation>
    <scope>TISSUE SPECIFICITY</scope>
    <scope>DEVELOPMENTAL STAGE</scope>
    <scope>SUBCELLULAR LOCATION</scope>
</reference>
<reference key="4">
    <citation type="journal article" date="2007" name="Evol. Bioinform. Online">
        <title>Characterization and evolution of the cell cycle-associated mob domain-containing proteins in eukaryotes.</title>
        <authorList>
            <person name="Vitulo N."/>
            <person name="Vezzi A."/>
            <person name="Galla G."/>
            <person name="Citterio S."/>
            <person name="Marino G."/>
            <person name="Ruperti B."/>
            <person name="Zermiani M."/>
            <person name="Albertini E."/>
            <person name="Valle G."/>
            <person name="Barcaccia G."/>
        </authorList>
    </citation>
    <scope>GENE FAMILY</scope>
    <scope>NOMENCLATURE</scope>
</reference>
<organism>
    <name type="scientific">Medicago sativa subsp. falcata</name>
    <name type="common">Sickle medic</name>
    <name type="synonym">Medicago falcata</name>
    <dbReference type="NCBI Taxonomy" id="3878"/>
    <lineage>
        <taxon>Eukaryota</taxon>
        <taxon>Viridiplantae</taxon>
        <taxon>Streptophyta</taxon>
        <taxon>Embryophyta</taxon>
        <taxon>Tracheophyta</taxon>
        <taxon>Spermatophyta</taxon>
        <taxon>Magnoliopsida</taxon>
        <taxon>eudicotyledons</taxon>
        <taxon>Gunneridae</taxon>
        <taxon>Pentapetalae</taxon>
        <taxon>rosids</taxon>
        <taxon>fabids</taxon>
        <taxon>Fabales</taxon>
        <taxon>Fabaceae</taxon>
        <taxon>Papilionoideae</taxon>
        <taxon>50 kb inversion clade</taxon>
        <taxon>NPAAA clade</taxon>
        <taxon>Hologalegina</taxon>
        <taxon>IRL clade</taxon>
        <taxon>Trifolieae</taxon>
        <taxon>Medicago</taxon>
    </lineage>
</organism>
<gene>
    <name evidence="6" type="primary">MOB1-A</name>
    <name evidence="7" type="synonym">MOB1A</name>
</gene>
<dbReference type="EMBL" id="AJ319713">
    <property type="protein sequence ID" value="CAC41010.2"/>
    <property type="molecule type" value="mRNA"/>
</dbReference>
<dbReference type="EMBL" id="AJ635581">
    <property type="protein sequence ID" value="CAG25780.1"/>
    <property type="molecule type" value="mRNA"/>
</dbReference>
<dbReference type="EMBL" id="AJ635582">
    <property type="protein sequence ID" value="CAG25781.1"/>
    <property type="molecule type" value="Genomic_DNA"/>
</dbReference>
<dbReference type="EMBL" id="AJ635583">
    <property type="protein sequence ID" value="CAG25782.1"/>
    <property type="molecule type" value="Genomic_DNA"/>
</dbReference>
<dbReference type="SMR" id="Q949G5"/>
<dbReference type="GO" id="GO:0005737">
    <property type="term" value="C:cytoplasm"/>
    <property type="evidence" value="ECO:0000314"/>
    <property type="project" value="UniProtKB"/>
</dbReference>
<dbReference type="GO" id="GO:0005856">
    <property type="term" value="C:cytoskeleton"/>
    <property type="evidence" value="ECO:0007669"/>
    <property type="project" value="UniProtKB-KW"/>
</dbReference>
<dbReference type="GO" id="GO:0009524">
    <property type="term" value="C:phragmoplast"/>
    <property type="evidence" value="ECO:0000314"/>
    <property type="project" value="UniProtKB"/>
</dbReference>
<dbReference type="GO" id="GO:0046872">
    <property type="term" value="F:metal ion binding"/>
    <property type="evidence" value="ECO:0007669"/>
    <property type="project" value="UniProtKB-KW"/>
</dbReference>
<dbReference type="FunFam" id="1.20.140.30:FF:000001">
    <property type="entry name" value="MOB kinase activator 1A"/>
    <property type="match status" value="1"/>
</dbReference>
<dbReference type="Gene3D" id="1.20.140.30">
    <property type="entry name" value="MOB kinase activator"/>
    <property type="match status" value="1"/>
</dbReference>
<dbReference type="InterPro" id="IPR005301">
    <property type="entry name" value="MOB_kinase_act_fam"/>
</dbReference>
<dbReference type="InterPro" id="IPR036703">
    <property type="entry name" value="MOB_kinase_act_sf"/>
</dbReference>
<dbReference type="PANTHER" id="PTHR22599">
    <property type="entry name" value="MPS ONE BINDER KINASE ACTIVATOR-LIKE MOB"/>
    <property type="match status" value="1"/>
</dbReference>
<dbReference type="Pfam" id="PF03637">
    <property type="entry name" value="Mob1_phocein"/>
    <property type="match status" value="1"/>
</dbReference>
<dbReference type="SMART" id="SM01388">
    <property type="entry name" value="Mob1_phocein"/>
    <property type="match status" value="1"/>
</dbReference>
<dbReference type="SUPFAM" id="SSF101152">
    <property type="entry name" value="Mob1/phocein"/>
    <property type="match status" value="1"/>
</dbReference>
<sequence>MSLFGLGSRNQKTFRPKKSAPTGSKGAQLQKHIDATLGSGNLREAVKLPPGEDINEWLAVNTVDFFNQVNTMFGTLTEFCTPSNCPTMTAGPKYEYRWADGVTIKKPIEVSAPKYVEYLMDWIESQLDDETIFPQRLGAPFPPNFRDVVKTIFKRLFRVYAHVYHSHFQKIVSLKEEAHLNTCFKHFVLFTWEFRLIEKAELAPLEDLVDSIIQL</sequence>
<accession>Q949G5</accession>
<accession>Q6KC85</accession>
<protein>
    <recommendedName>
        <fullName>MOB kinase activator-like 1A</fullName>
    </recommendedName>
    <alternativeName>
        <fullName>Mob1 homolog 1A</fullName>
    </alternativeName>
    <alternativeName>
        <fullName>Mps one binder kinase activator-like 1A</fullName>
    </alternativeName>
    <alternativeName>
        <fullName evidence="5">MsMob1-1</fullName>
    </alternativeName>
    <alternativeName>
        <fullName evidence="5">MsMob1-2</fullName>
    </alternativeName>
    <alternativeName>
        <fullName evidence="5">MsMob1-3</fullName>
    </alternativeName>
    <alternativeName>
        <fullName evidence="6">MsMob1-A</fullName>
    </alternativeName>
</protein>
<comment type="subcellular location">
    <subcellularLocation>
        <location>Cytoplasm</location>
    </subcellularLocation>
    <subcellularLocation>
        <location>Cytoplasm</location>
        <location>Cytoskeleton</location>
        <location>Phragmoplast</location>
    </subcellularLocation>
    <text evidence="4">Concentrated in punctuate and fibrillar structures during G2 and M phases. Localized to the cell division plane during cytokinesis.</text>
</comment>
<comment type="alternative products">
    <event type="alternative splicing"/>
    <isoform>
        <id>Q949G5-1</id>
        <name>1</name>
        <name>MsMob1-1</name>
        <sequence type="displayed"/>
    </isoform>
    <isoform>
        <id>Q949G5-2</id>
        <name>2</name>
        <name>MsMob1-2</name>
        <name>MsMob1-3</name>
        <sequence type="described" ref="VSP_057513 VSP_057514"/>
    </isoform>
</comment>
<comment type="tissue specificity">
    <text evidence="3 4">Isoform 1 is constitutively expressed (PubMed:16240174, PubMed:16460730). Isoform 2 is specifically expressed in flowers bud during sporogenesis and gametogenesis (PubMed:16240174).</text>
</comment>
<comment type="developmental stage">
    <text evidence="3 4">Mostly expressed in actively proliferating tissues (PubMed:16460730). Specifically expressed in degenerating megaspores of normal ovules and in enlarged megaspore mother cells and embryo sacs of apomeiotic ovules. Also detected in microspore tetrads at the beginning of pollen development as well as in tapetum cells of anthers undergoing programmed cell death (PCD) to allow pollen dispersal at maturity (PubMed:16240174).</text>
</comment>
<comment type="similarity">
    <text evidence="8">Belongs to the MOB1/phocein family.</text>
</comment>
<feature type="chain" id="PRO_0000432417" description="MOB kinase activator-like 1A">
    <location>
        <begin position="1"/>
        <end position="215"/>
    </location>
</feature>
<feature type="region of interest" description="Disordered" evidence="2">
    <location>
        <begin position="1"/>
        <end position="29"/>
    </location>
</feature>
<feature type="binding site" evidence="1">
    <location>
        <position position="80"/>
    </location>
    <ligand>
        <name>Zn(2+)</name>
        <dbReference type="ChEBI" id="CHEBI:29105"/>
    </ligand>
</feature>
<feature type="binding site" evidence="1">
    <location>
        <position position="85"/>
    </location>
    <ligand>
        <name>Zn(2+)</name>
        <dbReference type="ChEBI" id="CHEBI:29105"/>
    </ligand>
</feature>
<feature type="binding site" evidence="1">
    <location>
        <position position="162"/>
    </location>
    <ligand>
        <name>Zn(2+)</name>
        <dbReference type="ChEBI" id="CHEBI:29105"/>
    </ligand>
</feature>
<feature type="binding site" evidence="1">
    <location>
        <position position="167"/>
    </location>
    <ligand>
        <name>Zn(2+)</name>
        <dbReference type="ChEBI" id="CHEBI:29105"/>
    </ligand>
</feature>
<feature type="splice variant" id="VSP_057513" description="In isoform 2.">
    <original>FPPNFRD</original>
    <variation>LAKTLKQ</variation>
    <location>
        <begin position="141"/>
        <end position="147"/>
    </location>
</feature>
<feature type="splice variant" id="VSP_057514" description="In isoform 2.">
    <location>
        <begin position="148"/>
        <end position="215"/>
    </location>
</feature>
<feature type="sequence conflict" description="In Ref. 2; CAG25780/CAG25782." evidence="8" ref="2">
    <original>I</original>
    <variation>M</variation>
    <location>
        <position position="123"/>
    </location>
</feature>
<proteinExistence type="evidence at transcript level"/>